<reference key="1">
    <citation type="journal article" date="2004" name="J. Bacteriol.">
        <title>Complete genome sequence of the genetically tractable hydrogenotrophic methanogen Methanococcus maripaludis.</title>
        <authorList>
            <person name="Hendrickson E.L."/>
            <person name="Kaul R."/>
            <person name="Zhou Y."/>
            <person name="Bovee D."/>
            <person name="Chapman P."/>
            <person name="Chung J."/>
            <person name="Conway de Macario E."/>
            <person name="Dodsworth J.A."/>
            <person name="Gillett W."/>
            <person name="Graham D.E."/>
            <person name="Hackett M."/>
            <person name="Haydock A.K."/>
            <person name="Kang A."/>
            <person name="Land M.L."/>
            <person name="Levy R."/>
            <person name="Lie T.J."/>
            <person name="Major T.A."/>
            <person name="Moore B.C."/>
            <person name="Porat I."/>
            <person name="Palmeiri A."/>
            <person name="Rouse G."/>
            <person name="Saenphimmachak C."/>
            <person name="Soell D."/>
            <person name="Van Dien S."/>
            <person name="Wang T."/>
            <person name="Whitman W.B."/>
            <person name="Xia Q."/>
            <person name="Zhang Y."/>
            <person name="Larimer F.W."/>
            <person name="Olson M.V."/>
            <person name="Leigh J.A."/>
        </authorList>
    </citation>
    <scope>NUCLEOTIDE SEQUENCE [LARGE SCALE GENOMIC DNA]</scope>
    <source>
        <strain>DSM 14266 / JCM 13030 / NBRC 101832 / S2 / LL</strain>
    </source>
</reference>
<proteinExistence type="inferred from homology"/>
<accession>Q6LWZ4</accession>
<feature type="chain" id="PRO_0000147542" description="Tetrahydromethanopterin S-methyltransferase subunit E">
    <location>
        <begin position="1"/>
        <end position="299"/>
    </location>
</feature>
<feature type="transmembrane region" description="Helical" evidence="1">
    <location>
        <begin position="57"/>
        <end position="79"/>
    </location>
</feature>
<feature type="transmembrane region" description="Helical" evidence="1">
    <location>
        <begin position="89"/>
        <end position="111"/>
    </location>
</feature>
<feature type="transmembrane region" description="Helical" evidence="1">
    <location>
        <begin position="132"/>
        <end position="154"/>
    </location>
</feature>
<feature type="transmembrane region" description="Helical" evidence="1">
    <location>
        <begin position="164"/>
        <end position="183"/>
    </location>
</feature>
<feature type="transmembrane region" description="Helical" evidence="1">
    <location>
        <begin position="227"/>
        <end position="246"/>
    </location>
</feature>
<feature type="transmembrane region" description="Helical" evidence="1">
    <location>
        <begin position="261"/>
        <end position="283"/>
    </location>
</feature>
<dbReference type="EC" id="7.2.1.4" evidence="1"/>
<dbReference type="EMBL" id="BX950229">
    <property type="protein sequence ID" value="CAF31116.1"/>
    <property type="molecule type" value="Genomic_DNA"/>
</dbReference>
<dbReference type="RefSeq" id="WP_011171504.1">
    <property type="nucleotide sequence ID" value="NC_005791.1"/>
</dbReference>
<dbReference type="SMR" id="Q6LWZ4"/>
<dbReference type="STRING" id="267377.MMP1560"/>
<dbReference type="EnsemblBacteria" id="CAF31116">
    <property type="protein sequence ID" value="CAF31116"/>
    <property type="gene ID" value="MMP1560"/>
</dbReference>
<dbReference type="GeneID" id="2761114"/>
<dbReference type="GeneID" id="36102362"/>
<dbReference type="KEGG" id="mmp:MMP1560"/>
<dbReference type="PATRIC" id="fig|267377.15.peg.1598"/>
<dbReference type="eggNOG" id="arCOG04870">
    <property type="taxonomic scope" value="Archaea"/>
</dbReference>
<dbReference type="HOGENOM" id="CLU_958513_0_0_2"/>
<dbReference type="OrthoDB" id="82302at2157"/>
<dbReference type="UniPathway" id="UPA00640">
    <property type="reaction ID" value="UER00698"/>
</dbReference>
<dbReference type="Proteomes" id="UP000000590">
    <property type="component" value="Chromosome"/>
</dbReference>
<dbReference type="GO" id="GO:0005737">
    <property type="term" value="C:cytoplasm"/>
    <property type="evidence" value="ECO:0007669"/>
    <property type="project" value="InterPro"/>
</dbReference>
<dbReference type="GO" id="GO:0005886">
    <property type="term" value="C:plasma membrane"/>
    <property type="evidence" value="ECO:0007669"/>
    <property type="project" value="UniProtKB-SubCell"/>
</dbReference>
<dbReference type="GO" id="GO:0012506">
    <property type="term" value="C:vesicle membrane"/>
    <property type="evidence" value="ECO:0007669"/>
    <property type="project" value="InterPro"/>
</dbReference>
<dbReference type="GO" id="GO:0030269">
    <property type="term" value="F:tetrahydromethanopterin S-methyltransferase activity"/>
    <property type="evidence" value="ECO:0007669"/>
    <property type="project" value="UniProtKB-UniRule"/>
</dbReference>
<dbReference type="GO" id="GO:0019386">
    <property type="term" value="P:methanogenesis, from carbon dioxide"/>
    <property type="evidence" value="ECO:0007669"/>
    <property type="project" value="UniProtKB-UniRule"/>
</dbReference>
<dbReference type="GO" id="GO:0032259">
    <property type="term" value="P:methylation"/>
    <property type="evidence" value="ECO:0007669"/>
    <property type="project" value="UniProtKB-KW"/>
</dbReference>
<dbReference type="GO" id="GO:0006730">
    <property type="term" value="P:one-carbon metabolic process"/>
    <property type="evidence" value="ECO:0007669"/>
    <property type="project" value="UniProtKB-UniRule"/>
</dbReference>
<dbReference type="HAMAP" id="MF_01098">
    <property type="entry name" value="MtrE"/>
    <property type="match status" value="1"/>
</dbReference>
<dbReference type="InterPro" id="IPR005780">
    <property type="entry name" value="MeTrfase_E"/>
</dbReference>
<dbReference type="NCBIfam" id="TIGR01113">
    <property type="entry name" value="mtrE"/>
    <property type="match status" value="1"/>
</dbReference>
<dbReference type="Pfam" id="PF04206">
    <property type="entry name" value="MtrE"/>
    <property type="match status" value="1"/>
</dbReference>
<dbReference type="PIRSF" id="PIRSF016509">
    <property type="entry name" value="MtrE"/>
    <property type="match status" value="1"/>
</dbReference>
<gene>
    <name evidence="1" type="primary">mtrE</name>
    <name type="ordered locus">MMP1560</name>
</gene>
<sequence>MDPTLISLGALALAGAAATVSGCAEDLESDVGSQSNPNSQVQLGPQMGNIHRYFNKAISGEPVSYGLYVAVAGTIAWALINAGLNVVLAIIVGAGVAAIVHGAYSVSAFLGRTVGQSKKFGQPVYMDVLTSHIGPIVGHGFIAVFTMTLAAYLATTALGNPFPLPLVSLIFGITVGAIGSSTGDVHYGAEREYQKYPFGGGIPVANQGDIDIYAEYGVRNGLDSSYFCSRFGGPLTGLCFGLIIFLDGWRSILGNIIGGDLVTKTSIALLVGLLVVAVAAVINRKLEVYARNKYGPYRN</sequence>
<evidence type="ECO:0000255" key="1">
    <source>
        <dbReference type="HAMAP-Rule" id="MF_01098"/>
    </source>
</evidence>
<keyword id="KW-1003">Cell membrane</keyword>
<keyword id="KW-0472">Membrane</keyword>
<keyword id="KW-0484">Methanogenesis</keyword>
<keyword id="KW-0489">Methyltransferase</keyword>
<keyword id="KW-0554">One-carbon metabolism</keyword>
<keyword id="KW-1185">Reference proteome</keyword>
<keyword id="KW-0808">Transferase</keyword>
<keyword id="KW-1278">Translocase</keyword>
<keyword id="KW-0812">Transmembrane</keyword>
<keyword id="KW-1133">Transmembrane helix</keyword>
<organism>
    <name type="scientific">Methanococcus maripaludis (strain DSM 14266 / JCM 13030 / NBRC 101832 / S2 / LL)</name>
    <dbReference type="NCBI Taxonomy" id="267377"/>
    <lineage>
        <taxon>Archaea</taxon>
        <taxon>Methanobacteriati</taxon>
        <taxon>Methanobacteriota</taxon>
        <taxon>Methanomada group</taxon>
        <taxon>Methanococci</taxon>
        <taxon>Methanococcales</taxon>
        <taxon>Methanococcaceae</taxon>
        <taxon>Methanococcus</taxon>
    </lineage>
</organism>
<name>MTRE_METMP</name>
<protein>
    <recommendedName>
        <fullName evidence="1">Tetrahydromethanopterin S-methyltransferase subunit E</fullName>
        <ecNumber evidence="1">7.2.1.4</ecNumber>
    </recommendedName>
    <alternativeName>
        <fullName evidence="1">N5-methyltetrahydromethanopterin--coenzyme M methyltransferase subunit E</fullName>
    </alternativeName>
</protein>
<comment type="function">
    <text evidence="1">Part of a complex that catalyzes the formation of methyl-coenzyme M and tetrahydromethanopterin from coenzyme M and methyl-tetrahydromethanopterin. This is an energy-conserving, sodium-ion translocating step.</text>
</comment>
<comment type="catalytic activity">
    <reaction evidence="1">
        <text>5-methyl-5,6,7,8-tetrahydromethanopterin + coenzyme M + 2 Na(+)(in) = 5,6,7,8-tetrahydromethanopterin + methyl-coenzyme M + 2 Na(+)(out)</text>
        <dbReference type="Rhea" id="RHEA:53492"/>
        <dbReference type="ChEBI" id="CHEBI:29101"/>
        <dbReference type="ChEBI" id="CHEBI:58103"/>
        <dbReference type="ChEBI" id="CHEBI:58116"/>
        <dbReference type="ChEBI" id="CHEBI:58286"/>
        <dbReference type="ChEBI" id="CHEBI:58319"/>
        <dbReference type="EC" id="7.2.1.4"/>
    </reaction>
</comment>
<comment type="pathway">
    <text evidence="1">One-carbon metabolism; methanogenesis from CO(2); methyl-coenzyme M from 5,10-methylene-5,6,7,8-tetrahydromethanopterin: step 2/2.</text>
</comment>
<comment type="subunit">
    <text evidence="1">The complex is composed of 8 subunits; MtrA, MtrB, MtrC, MtrD, MtrE, MtrF, MtrG and MtrH.</text>
</comment>
<comment type="subcellular location">
    <subcellularLocation>
        <location evidence="1">Cell membrane</location>
        <topology evidence="1">Multi-pass membrane protein</topology>
    </subcellularLocation>
</comment>
<comment type="similarity">
    <text evidence="1">Belongs to the MtrE family.</text>
</comment>